<dbReference type="EC" id="1.21.3.1"/>
<dbReference type="EMBL" id="X57310">
    <property type="protein sequence ID" value="CAA40562.1"/>
    <property type="molecule type" value="Genomic_DNA"/>
</dbReference>
<dbReference type="PIR" id="S15284">
    <property type="entry name" value="S15284"/>
</dbReference>
<dbReference type="SMR" id="P27744"/>
<dbReference type="BioCyc" id="MetaCyc:MONOMER-13365"/>
<dbReference type="BRENDA" id="1.21.3.1">
    <property type="organism ID" value="311"/>
</dbReference>
<dbReference type="UniPathway" id="UPA00149">
    <property type="reaction ID" value="UER00240"/>
</dbReference>
<dbReference type="GO" id="GO:0005506">
    <property type="term" value="F:iron ion binding"/>
    <property type="evidence" value="ECO:0007669"/>
    <property type="project" value="InterPro"/>
</dbReference>
<dbReference type="GO" id="GO:0016216">
    <property type="term" value="F:isopenicillin-N synthase activity"/>
    <property type="evidence" value="ECO:0007669"/>
    <property type="project" value="UniProtKB-EC"/>
</dbReference>
<dbReference type="GO" id="GO:0031418">
    <property type="term" value="F:L-ascorbic acid binding"/>
    <property type="evidence" value="ECO:0007669"/>
    <property type="project" value="UniProtKB-KW"/>
</dbReference>
<dbReference type="GO" id="GO:0017000">
    <property type="term" value="P:antibiotic biosynthetic process"/>
    <property type="evidence" value="ECO:0007669"/>
    <property type="project" value="UniProtKB-KW"/>
</dbReference>
<dbReference type="Gene3D" id="2.60.120.330">
    <property type="entry name" value="B-lactam Antibiotic, Isopenicillin N Synthase, Chain"/>
    <property type="match status" value="1"/>
</dbReference>
<dbReference type="InterPro" id="IPR026992">
    <property type="entry name" value="DIOX_N"/>
</dbReference>
<dbReference type="InterPro" id="IPR044861">
    <property type="entry name" value="IPNS-like_FE2OG_OXY"/>
</dbReference>
<dbReference type="InterPro" id="IPR027443">
    <property type="entry name" value="IPNS-like_sf"/>
</dbReference>
<dbReference type="InterPro" id="IPR050231">
    <property type="entry name" value="Iron_ascorbate_oxido_reductase"/>
</dbReference>
<dbReference type="InterPro" id="IPR002057">
    <property type="entry name" value="Isopenicillin-N_synth_CS"/>
</dbReference>
<dbReference type="InterPro" id="IPR005123">
    <property type="entry name" value="Oxoglu/Fe-dep_dioxygenase_dom"/>
</dbReference>
<dbReference type="PANTHER" id="PTHR47990">
    <property type="entry name" value="2-OXOGLUTARATE (2OG) AND FE(II)-DEPENDENT OXYGENASE SUPERFAMILY PROTEIN-RELATED"/>
    <property type="match status" value="1"/>
</dbReference>
<dbReference type="Pfam" id="PF03171">
    <property type="entry name" value="2OG-FeII_Oxy"/>
    <property type="match status" value="1"/>
</dbReference>
<dbReference type="Pfam" id="PF14226">
    <property type="entry name" value="DIOX_N"/>
    <property type="match status" value="1"/>
</dbReference>
<dbReference type="PRINTS" id="PR00682">
    <property type="entry name" value="IPNSYNTHASE"/>
</dbReference>
<dbReference type="SUPFAM" id="SSF51197">
    <property type="entry name" value="Clavaminate synthase-like"/>
    <property type="match status" value="1"/>
</dbReference>
<dbReference type="PROSITE" id="PS51471">
    <property type="entry name" value="FE2OG_OXY"/>
    <property type="match status" value="1"/>
</dbReference>
<dbReference type="PROSITE" id="PS00185">
    <property type="entry name" value="IPNS_1"/>
    <property type="match status" value="1"/>
</dbReference>
<reference key="1">
    <citation type="journal article" date="1991" name="Mol. Microbiol.">
        <title>The cephamycin biosynthetic genes pcbAB, encoding a large multidomain peptide synthetase, and pcbC of Nocardia lactamdurans are clustered together in an organization different from the same genes in Acremonium chrysogenum and Penicillium chrysogenum.</title>
        <authorList>
            <person name="Coque J.J.R."/>
            <person name="Martin J.F."/>
            <person name="Calzada J.G."/>
            <person name="Liras P."/>
        </authorList>
    </citation>
    <scope>NUCLEOTIDE SEQUENCE [GENOMIC DNA]</scope>
    <source>
        <strain>VAR LC 411</strain>
    </source>
</reference>
<gene>
    <name type="primary">pcbC</name>
</gene>
<evidence type="ECO:0000250" key="1">
    <source>
        <dbReference type="UniProtKB" id="P05326"/>
    </source>
</evidence>
<evidence type="ECO:0000255" key="2">
    <source>
        <dbReference type="PROSITE-ProRule" id="PRU00805"/>
    </source>
</evidence>
<evidence type="ECO:0000305" key="3"/>
<sequence length="328" mass="37466">MKMPSAEVPTIDVSPLFGDDAQEKVRVGQEINKACRGSGFFYAANHGVDVQRLQDVVNEFHRTMSPQEKYDLAIHAYNKNNSHVRNGYYMAIEGKKAVESFCYLNPSFSEDHPEIKAGTPMHEVNSWPDEEKHPSFRPFCEEYYWTMHRLSKVLMRGFALALGKDERFFEPELKEADTLSSVSLIRYPYLEDYPPVKTGPDGEKLSFEDHFDVSMITVLYQTQVQNLQVETVDGWRDLPTSDTDFLVNAGTYLGHLTNDYFPSPLHRVKFVNAERLSLPFFFHAGQHTLIEPFFPDGAPEGKQGNEAVRYGDYLNHGLHSLIVKNGQT</sequence>
<organism>
    <name type="scientific">Amycolatopsis lactamdurans</name>
    <name type="common">Nocardia lactamdurans</name>
    <dbReference type="NCBI Taxonomy" id="1913"/>
    <lineage>
        <taxon>Bacteria</taxon>
        <taxon>Bacillati</taxon>
        <taxon>Actinomycetota</taxon>
        <taxon>Actinomycetes</taxon>
        <taxon>Pseudonocardiales</taxon>
        <taxon>Pseudonocardiaceae</taxon>
        <taxon>Amycolatopsis</taxon>
    </lineage>
</organism>
<comment type="function">
    <text>Removes, in the presence of oxygen, 4 hydrogen atoms from delta-L-(alpha-aminoadipyl)-L-cysteinyl-D-valine (ACV) to form the azetidinone and thiazolidine rings of isopenicillin.</text>
</comment>
<comment type="catalytic activity">
    <reaction>
        <text>N-[(5S)-5-amino-5-carboxypentanoyl]-L-cysteinyl-D-valine + O2 = isopenicillin N + 2 H2O</text>
        <dbReference type="Rhea" id="RHEA:22428"/>
        <dbReference type="ChEBI" id="CHEBI:15377"/>
        <dbReference type="ChEBI" id="CHEBI:15379"/>
        <dbReference type="ChEBI" id="CHEBI:58399"/>
        <dbReference type="ChEBI" id="CHEBI:58572"/>
        <dbReference type="EC" id="1.21.3.1"/>
    </reaction>
</comment>
<comment type="cofactor">
    <cofactor>
        <name>Fe cation</name>
        <dbReference type="ChEBI" id="CHEBI:24875"/>
    </cofactor>
</comment>
<comment type="cofactor">
    <cofactor>
        <name>L-ascorbate</name>
        <dbReference type="ChEBI" id="CHEBI:38290"/>
    </cofactor>
</comment>
<comment type="pathway">
    <text>Antibiotic biosynthesis; penicillin G biosynthesis; penicillin G from L-alpha-aminoadipate and L-cysteine and L-valine: step 2/3.</text>
</comment>
<comment type="similarity">
    <text evidence="3">Belongs to the iron/ascorbate-dependent oxidoreductase family.</text>
</comment>
<name>IPNS_AMYLA</name>
<keyword id="KW-0045">Antibiotic biosynthesis</keyword>
<keyword id="KW-0408">Iron</keyword>
<keyword id="KW-0479">Metal-binding</keyword>
<keyword id="KW-0560">Oxidoreductase</keyword>
<keyword id="KW-0847">Vitamin C</keyword>
<proteinExistence type="inferred from homology"/>
<feature type="chain" id="PRO_0000219502" description="Isopenicillin N synthase">
    <location>
        <begin position="1"/>
        <end position="328"/>
    </location>
</feature>
<feature type="domain" description="Fe2OG dioxygenase" evidence="2">
    <location>
        <begin position="178"/>
        <end position="284"/>
    </location>
</feature>
<feature type="binding site" evidence="1">
    <location>
        <position position="85"/>
    </location>
    <ligand>
        <name>isopenicillin N</name>
        <dbReference type="ChEBI" id="CHEBI:58399"/>
    </ligand>
</feature>
<feature type="binding site" evidence="1">
    <location>
        <position position="85"/>
    </location>
    <ligand>
        <name>N-[(5S)-5-amino-5-carboxypentanoyl]-L-cysteinyl-D-valine</name>
        <dbReference type="ChEBI" id="CHEBI:58572"/>
    </ligand>
</feature>
<feature type="binding site" evidence="1">
    <location>
        <position position="89"/>
    </location>
    <ligand>
        <name>isopenicillin N</name>
        <dbReference type="ChEBI" id="CHEBI:58399"/>
    </ligand>
</feature>
<feature type="binding site" evidence="1">
    <location>
        <position position="89"/>
    </location>
    <ligand>
        <name>N-[(5S)-5-amino-5-carboxypentanoyl]-L-cysteinyl-D-valine</name>
        <dbReference type="ChEBI" id="CHEBI:58572"/>
    </ligand>
</feature>
<feature type="binding site" evidence="1">
    <location>
        <position position="181"/>
    </location>
    <ligand>
        <name>isopenicillin N</name>
        <dbReference type="ChEBI" id="CHEBI:58399"/>
    </ligand>
</feature>
<feature type="binding site" evidence="1">
    <location>
        <position position="181"/>
    </location>
    <ligand>
        <name>N-[(5S)-5-amino-5-carboxypentanoyl]-L-cysteinyl-D-valine</name>
        <dbReference type="ChEBI" id="CHEBI:58572"/>
    </ligand>
</feature>
<feature type="binding site" evidence="1">
    <location>
        <position position="187"/>
    </location>
    <ligand>
        <name>isopenicillin N</name>
        <dbReference type="ChEBI" id="CHEBI:58399"/>
    </ligand>
</feature>
<feature type="binding site" evidence="1">
    <location>
        <position position="187"/>
    </location>
    <ligand>
        <name>N-[(5S)-5-amino-5-carboxypentanoyl]-L-cysteinyl-D-valine</name>
        <dbReference type="ChEBI" id="CHEBI:58572"/>
    </ligand>
</feature>
<feature type="binding site" evidence="2">
    <location>
        <position position="210"/>
    </location>
    <ligand>
        <name>Fe(2+)</name>
        <dbReference type="ChEBI" id="CHEBI:29033"/>
    </ligand>
</feature>
<feature type="binding site" evidence="1">
    <location>
        <position position="210"/>
    </location>
    <ligand>
        <name>N-[(5S)-5-amino-5-carboxypentanoyl]-L-cysteinyl-D-valine</name>
        <dbReference type="ChEBI" id="CHEBI:58572"/>
    </ligand>
</feature>
<feature type="binding site" evidence="2">
    <location>
        <position position="212"/>
    </location>
    <ligand>
        <name>Fe(2+)</name>
        <dbReference type="ChEBI" id="CHEBI:29033"/>
    </ligand>
</feature>
<feature type="binding site" evidence="1">
    <location>
        <position position="212"/>
    </location>
    <ligand>
        <name>N-[(5S)-5-amino-5-carboxypentanoyl]-L-cysteinyl-D-valine</name>
        <dbReference type="ChEBI" id="CHEBI:58572"/>
    </ligand>
</feature>
<feature type="binding site" evidence="2">
    <location>
        <position position="266"/>
    </location>
    <ligand>
        <name>Fe(2+)</name>
        <dbReference type="ChEBI" id="CHEBI:29033"/>
    </ligand>
</feature>
<feature type="binding site" evidence="2">
    <location>
        <position position="275"/>
    </location>
    <ligand>
        <name>2-oxoglutarate</name>
        <dbReference type="ChEBI" id="CHEBI:16810"/>
    </ligand>
</feature>
<feature type="binding site" evidence="1">
    <location>
        <position position="277"/>
    </location>
    <ligand>
        <name>isopenicillin N</name>
        <dbReference type="ChEBI" id="CHEBI:58399"/>
    </ligand>
</feature>
<feature type="binding site" evidence="1">
    <location>
        <position position="277"/>
    </location>
    <ligand>
        <name>N-[(5S)-5-amino-5-carboxypentanoyl]-L-cysteinyl-D-valine</name>
        <dbReference type="ChEBI" id="CHEBI:58572"/>
    </ligand>
</feature>
<accession>P27744</accession>
<protein>
    <recommendedName>
        <fullName>Isopenicillin N synthase</fullName>
        <shortName>IPNS</shortName>
        <ecNumber>1.21.3.1</ecNumber>
    </recommendedName>
</protein>